<keyword id="KW-0488">Methylation</keyword>
<keyword id="KW-1185">Reference proteome</keyword>
<keyword id="KW-0687">Ribonucleoprotein</keyword>
<keyword id="KW-0689">Ribosomal protein</keyword>
<keyword id="KW-0694">RNA-binding</keyword>
<keyword id="KW-0699">rRNA-binding</keyword>
<keyword id="KW-0820">tRNA-binding</keyword>
<sequence length="128" mass="14181">MPTINQLIRKGREPKERKSKSPALMGNPQKRGVCIRVTTMTPKKPNSALRKVARVRLTNGIEVWAYIPGIGHNLQEHSVVLVRGGRVKDLPGVRYHIIRGALDAAGVEGRRQGRSKYGAKRPKEGGKK</sequence>
<reference key="1">
    <citation type="journal article" date="2016" name="Front. Microbiol.">
        <title>The complete genome sequence of hyperthermophile Dictyoglomus turgidum DSM 6724 reveals a specialized carbohydrate fermentor.</title>
        <authorList>
            <person name="Brumm P.J."/>
            <person name="Gowda K."/>
            <person name="Robb F.T."/>
            <person name="Mead D.A."/>
        </authorList>
    </citation>
    <scope>NUCLEOTIDE SEQUENCE [LARGE SCALE GENOMIC DNA]</scope>
    <source>
        <strain>DSM 6724 / Z-1310</strain>
    </source>
</reference>
<protein>
    <recommendedName>
        <fullName evidence="2">Small ribosomal subunit protein uS12</fullName>
    </recommendedName>
    <alternativeName>
        <fullName evidence="4">30S ribosomal protein S12</fullName>
    </alternativeName>
</protein>
<comment type="function">
    <text evidence="2">With S4 and S5 plays an important role in translational accuracy.</text>
</comment>
<comment type="function">
    <text evidence="2">Interacts with and stabilizes bases of the 16S rRNA that are involved in tRNA selection in the A site and with the mRNA backbone. Located at the interface of the 30S and 50S subunits, it traverses the body of the 30S subunit contacting proteins on the other side and probably holding the rRNA structure together. The combined cluster of proteins S8, S12 and S17 appears to hold together the shoulder and platform of the 30S subunit.</text>
</comment>
<comment type="subunit">
    <text evidence="2">Part of the 30S ribosomal subunit. Contacts proteins S8 and S17. May interact with IF1 in the 30S initiation complex.</text>
</comment>
<comment type="similarity">
    <text evidence="2">Belongs to the universal ribosomal protein uS12 family.</text>
</comment>
<organism>
    <name type="scientific">Dictyoglomus turgidum (strain DSM 6724 / Z-1310)</name>
    <dbReference type="NCBI Taxonomy" id="515635"/>
    <lineage>
        <taxon>Bacteria</taxon>
        <taxon>Pseudomonadati</taxon>
        <taxon>Dictyoglomota</taxon>
        <taxon>Dictyoglomia</taxon>
        <taxon>Dictyoglomales</taxon>
        <taxon>Dictyoglomaceae</taxon>
        <taxon>Dictyoglomus</taxon>
    </lineage>
</organism>
<feature type="chain" id="PRO_1000194158" description="Small ribosomal subunit protein uS12">
    <location>
        <begin position="1"/>
        <end position="128"/>
    </location>
</feature>
<feature type="region of interest" description="Disordered" evidence="3">
    <location>
        <begin position="1"/>
        <end position="29"/>
    </location>
</feature>
<feature type="region of interest" description="Disordered" evidence="3">
    <location>
        <begin position="106"/>
        <end position="128"/>
    </location>
</feature>
<feature type="modified residue" description="3-methylthioaspartic acid" evidence="1">
    <location>
        <position position="89"/>
    </location>
</feature>
<dbReference type="EMBL" id="CP001251">
    <property type="protein sequence ID" value="ACK42256.1"/>
    <property type="molecule type" value="Genomic_DNA"/>
</dbReference>
<dbReference type="RefSeq" id="WP_012583340.1">
    <property type="nucleotide sequence ID" value="NC_011661.1"/>
</dbReference>
<dbReference type="RefSeq" id="YP_002352870.1">
    <property type="nucleotide sequence ID" value="NC_011661.1"/>
</dbReference>
<dbReference type="SMR" id="B8E1C8"/>
<dbReference type="FunCoup" id="B8E1C8">
    <property type="interactions" value="346"/>
</dbReference>
<dbReference type="STRING" id="515635.Dtur_0976"/>
<dbReference type="EnsemblBacteria" id="ACK42256">
    <property type="protein sequence ID" value="ACK42256"/>
    <property type="gene ID" value="Dtur_0976"/>
</dbReference>
<dbReference type="KEGG" id="dtu:Dtur_0976"/>
<dbReference type="PATRIC" id="fig|515635.4.peg.1013"/>
<dbReference type="eggNOG" id="COG0048">
    <property type="taxonomic scope" value="Bacteria"/>
</dbReference>
<dbReference type="HOGENOM" id="CLU_104295_1_2_0"/>
<dbReference type="InParanoid" id="B8E1C8"/>
<dbReference type="OrthoDB" id="9802366at2"/>
<dbReference type="Proteomes" id="UP000007719">
    <property type="component" value="Chromosome"/>
</dbReference>
<dbReference type="GO" id="GO:0005840">
    <property type="term" value="C:ribosome"/>
    <property type="evidence" value="ECO:0000318"/>
    <property type="project" value="GO_Central"/>
</dbReference>
<dbReference type="GO" id="GO:0015935">
    <property type="term" value="C:small ribosomal subunit"/>
    <property type="evidence" value="ECO:0007669"/>
    <property type="project" value="InterPro"/>
</dbReference>
<dbReference type="GO" id="GO:0019843">
    <property type="term" value="F:rRNA binding"/>
    <property type="evidence" value="ECO:0007669"/>
    <property type="project" value="UniProtKB-UniRule"/>
</dbReference>
<dbReference type="GO" id="GO:0003735">
    <property type="term" value="F:structural constituent of ribosome"/>
    <property type="evidence" value="ECO:0000318"/>
    <property type="project" value="GO_Central"/>
</dbReference>
<dbReference type="GO" id="GO:0000049">
    <property type="term" value="F:tRNA binding"/>
    <property type="evidence" value="ECO:0007669"/>
    <property type="project" value="UniProtKB-UniRule"/>
</dbReference>
<dbReference type="GO" id="GO:0006412">
    <property type="term" value="P:translation"/>
    <property type="evidence" value="ECO:0000318"/>
    <property type="project" value="GO_Central"/>
</dbReference>
<dbReference type="CDD" id="cd03368">
    <property type="entry name" value="Ribosomal_S12"/>
    <property type="match status" value="1"/>
</dbReference>
<dbReference type="FunFam" id="2.40.50.140:FF:000001">
    <property type="entry name" value="30S ribosomal protein S12"/>
    <property type="match status" value="1"/>
</dbReference>
<dbReference type="Gene3D" id="2.40.50.140">
    <property type="entry name" value="Nucleic acid-binding proteins"/>
    <property type="match status" value="1"/>
</dbReference>
<dbReference type="HAMAP" id="MF_00403_B">
    <property type="entry name" value="Ribosomal_uS12_B"/>
    <property type="match status" value="1"/>
</dbReference>
<dbReference type="InterPro" id="IPR012340">
    <property type="entry name" value="NA-bd_OB-fold"/>
</dbReference>
<dbReference type="InterPro" id="IPR006032">
    <property type="entry name" value="Ribosomal_uS12"/>
</dbReference>
<dbReference type="InterPro" id="IPR005679">
    <property type="entry name" value="Ribosomal_uS12_bac"/>
</dbReference>
<dbReference type="NCBIfam" id="TIGR00981">
    <property type="entry name" value="rpsL_bact"/>
    <property type="match status" value="1"/>
</dbReference>
<dbReference type="PANTHER" id="PTHR11652">
    <property type="entry name" value="30S RIBOSOMAL PROTEIN S12 FAMILY MEMBER"/>
    <property type="match status" value="1"/>
</dbReference>
<dbReference type="Pfam" id="PF00164">
    <property type="entry name" value="Ribosom_S12_S23"/>
    <property type="match status" value="1"/>
</dbReference>
<dbReference type="PIRSF" id="PIRSF002133">
    <property type="entry name" value="Ribosomal_S12/S23"/>
    <property type="match status" value="1"/>
</dbReference>
<dbReference type="PRINTS" id="PR01034">
    <property type="entry name" value="RIBOSOMALS12"/>
</dbReference>
<dbReference type="SUPFAM" id="SSF50249">
    <property type="entry name" value="Nucleic acid-binding proteins"/>
    <property type="match status" value="1"/>
</dbReference>
<dbReference type="PROSITE" id="PS00055">
    <property type="entry name" value="RIBOSOMAL_S12"/>
    <property type="match status" value="1"/>
</dbReference>
<name>RS12_DICTD</name>
<proteinExistence type="inferred from homology"/>
<gene>
    <name evidence="2" type="primary">rpsL</name>
    <name type="ordered locus">Dtur_0976</name>
</gene>
<evidence type="ECO:0000250" key="1"/>
<evidence type="ECO:0000255" key="2">
    <source>
        <dbReference type="HAMAP-Rule" id="MF_00403"/>
    </source>
</evidence>
<evidence type="ECO:0000256" key="3">
    <source>
        <dbReference type="SAM" id="MobiDB-lite"/>
    </source>
</evidence>
<evidence type="ECO:0000305" key="4"/>
<accession>B8E1C8</accession>